<comment type="similarity">
    <text evidence="1">Belongs to the bacilliredoxin family.</text>
</comment>
<feature type="chain" id="PRO_0000272020" description="Bacilliredoxin SSP1311">
    <location>
        <begin position="1"/>
        <end position="144"/>
    </location>
</feature>
<sequence length="144" mass="16036">MNAYEAYMNELATQMRSELTGRDFKSLETADEVSNFMTNVGSDDTTFVVINSTCGCAAGLARPAAVTVVEQNDKKPTNKVTVFAGQDKEATATMRDYIQQVPSSPSYALFKGQELKHFIPREHIEGRDIQDICMDIKDAFDDYC</sequence>
<proteinExistence type="inferred from homology"/>
<gene>
    <name type="ordered locus">SSP1311</name>
</gene>
<accession>Q49XN9</accession>
<dbReference type="EMBL" id="AP008934">
    <property type="protein sequence ID" value="BAE18456.1"/>
    <property type="molecule type" value="Genomic_DNA"/>
</dbReference>
<dbReference type="SMR" id="Q49XN9"/>
<dbReference type="KEGG" id="ssp:SSP1311"/>
<dbReference type="eggNOG" id="ENOG5030YIF">
    <property type="taxonomic scope" value="Bacteria"/>
</dbReference>
<dbReference type="HOGENOM" id="CLU_132521_0_0_9"/>
<dbReference type="OrthoDB" id="9793981at2"/>
<dbReference type="Proteomes" id="UP000006371">
    <property type="component" value="Chromosome"/>
</dbReference>
<dbReference type="GO" id="GO:0045454">
    <property type="term" value="P:cell redox homeostasis"/>
    <property type="evidence" value="ECO:0000250"/>
    <property type="project" value="UniProtKB"/>
</dbReference>
<dbReference type="Gene3D" id="3.40.30.10">
    <property type="entry name" value="Glutaredoxin"/>
    <property type="match status" value="1"/>
</dbReference>
<dbReference type="InterPro" id="IPR009474">
    <property type="entry name" value="BrxB/BrxA"/>
</dbReference>
<dbReference type="NCBIfam" id="TIGR04191">
    <property type="entry name" value="YphP_YqiW"/>
    <property type="match status" value="1"/>
</dbReference>
<dbReference type="PANTHER" id="PTHR40052:SF2">
    <property type="entry name" value="BACILLIREDOXIN BRXA"/>
    <property type="match status" value="1"/>
</dbReference>
<dbReference type="PANTHER" id="PTHR40052">
    <property type="entry name" value="UPF0403 PROTEIN YQIW-RELATED"/>
    <property type="match status" value="1"/>
</dbReference>
<dbReference type="Pfam" id="PF06491">
    <property type="entry name" value="Disulph_isomer"/>
    <property type="match status" value="1"/>
</dbReference>
<name>Y1311_STAS1</name>
<keyword id="KW-1185">Reference proteome</keyword>
<organism>
    <name type="scientific">Staphylococcus saprophyticus subsp. saprophyticus (strain ATCC 15305 / DSM 20229 / NCIMB 8711 / NCTC 7292 / S-41)</name>
    <dbReference type="NCBI Taxonomy" id="342451"/>
    <lineage>
        <taxon>Bacteria</taxon>
        <taxon>Bacillati</taxon>
        <taxon>Bacillota</taxon>
        <taxon>Bacilli</taxon>
        <taxon>Bacillales</taxon>
        <taxon>Staphylococcaceae</taxon>
        <taxon>Staphylococcus</taxon>
    </lineage>
</organism>
<evidence type="ECO:0000305" key="1"/>
<reference key="1">
    <citation type="journal article" date="2005" name="Proc. Natl. Acad. Sci. U.S.A.">
        <title>Whole genome sequence of Staphylococcus saprophyticus reveals the pathogenesis of uncomplicated urinary tract infection.</title>
        <authorList>
            <person name="Kuroda M."/>
            <person name="Yamashita A."/>
            <person name="Hirakawa H."/>
            <person name="Kumano M."/>
            <person name="Morikawa K."/>
            <person name="Higashide M."/>
            <person name="Maruyama A."/>
            <person name="Inose Y."/>
            <person name="Matoba K."/>
            <person name="Toh H."/>
            <person name="Kuhara S."/>
            <person name="Hattori M."/>
            <person name="Ohta T."/>
        </authorList>
    </citation>
    <scope>NUCLEOTIDE SEQUENCE [LARGE SCALE GENOMIC DNA]</scope>
    <source>
        <strain>ATCC 15305 / DSM 20229 / NCIMB 8711 / NCTC 7292 / S-41</strain>
    </source>
</reference>
<protein>
    <recommendedName>
        <fullName evidence="1">Bacilliredoxin SSP1311</fullName>
    </recommendedName>
</protein>